<keyword id="KW-0030">Aminoacyl-tRNA synthetase</keyword>
<keyword id="KW-0067">ATP-binding</keyword>
<keyword id="KW-0963">Cytoplasm</keyword>
<keyword id="KW-0436">Ligase</keyword>
<keyword id="KW-0547">Nucleotide-binding</keyword>
<keyword id="KW-0648">Protein biosynthesis</keyword>
<keyword id="KW-1185">Reference proteome</keyword>
<dbReference type="EC" id="6.1.1.19" evidence="1"/>
<dbReference type="EMBL" id="CP000140">
    <property type="protein sequence ID" value="ABR45299.1"/>
    <property type="molecule type" value="Genomic_DNA"/>
</dbReference>
<dbReference type="RefSeq" id="WP_012056086.1">
    <property type="nucleotide sequence ID" value="NC_009615.1"/>
</dbReference>
<dbReference type="SMR" id="A6LHY5"/>
<dbReference type="STRING" id="435591.BDI_3601"/>
<dbReference type="PaxDb" id="435591-BDI_3601"/>
<dbReference type="KEGG" id="pdi:BDI_3601"/>
<dbReference type="PATRIC" id="fig|435591.13.peg.3564"/>
<dbReference type="eggNOG" id="COG0018">
    <property type="taxonomic scope" value="Bacteria"/>
</dbReference>
<dbReference type="HOGENOM" id="CLU_006406_6_1_10"/>
<dbReference type="BioCyc" id="PDIS435591:G1G5A-3693-MONOMER"/>
<dbReference type="Proteomes" id="UP000000566">
    <property type="component" value="Chromosome"/>
</dbReference>
<dbReference type="GO" id="GO:0005737">
    <property type="term" value="C:cytoplasm"/>
    <property type="evidence" value="ECO:0007669"/>
    <property type="project" value="UniProtKB-SubCell"/>
</dbReference>
<dbReference type="GO" id="GO:0004814">
    <property type="term" value="F:arginine-tRNA ligase activity"/>
    <property type="evidence" value="ECO:0007669"/>
    <property type="project" value="UniProtKB-UniRule"/>
</dbReference>
<dbReference type="GO" id="GO:0005524">
    <property type="term" value="F:ATP binding"/>
    <property type="evidence" value="ECO:0007669"/>
    <property type="project" value="UniProtKB-UniRule"/>
</dbReference>
<dbReference type="GO" id="GO:0006420">
    <property type="term" value="P:arginyl-tRNA aminoacylation"/>
    <property type="evidence" value="ECO:0007669"/>
    <property type="project" value="UniProtKB-UniRule"/>
</dbReference>
<dbReference type="FunFam" id="3.40.50.620:FF:000125">
    <property type="entry name" value="Arginine--tRNA ligase"/>
    <property type="match status" value="1"/>
</dbReference>
<dbReference type="FunFam" id="1.10.730.10:FF:000006">
    <property type="entry name" value="Arginyl-tRNA synthetase 2, mitochondrial"/>
    <property type="match status" value="1"/>
</dbReference>
<dbReference type="Gene3D" id="3.30.1360.70">
    <property type="entry name" value="Arginyl tRNA synthetase N-terminal domain"/>
    <property type="match status" value="1"/>
</dbReference>
<dbReference type="Gene3D" id="3.40.50.620">
    <property type="entry name" value="HUPs"/>
    <property type="match status" value="1"/>
</dbReference>
<dbReference type="Gene3D" id="1.10.730.10">
    <property type="entry name" value="Isoleucyl-tRNA Synthetase, Domain 1"/>
    <property type="match status" value="1"/>
</dbReference>
<dbReference type="HAMAP" id="MF_00123">
    <property type="entry name" value="Arg_tRNA_synth"/>
    <property type="match status" value="1"/>
</dbReference>
<dbReference type="InterPro" id="IPR001412">
    <property type="entry name" value="aa-tRNA-synth_I_CS"/>
</dbReference>
<dbReference type="InterPro" id="IPR001278">
    <property type="entry name" value="Arg-tRNA-ligase"/>
</dbReference>
<dbReference type="InterPro" id="IPR005148">
    <property type="entry name" value="Arg-tRNA-synth_N"/>
</dbReference>
<dbReference type="InterPro" id="IPR036695">
    <property type="entry name" value="Arg-tRNA-synth_N_sf"/>
</dbReference>
<dbReference type="InterPro" id="IPR035684">
    <property type="entry name" value="ArgRS_core"/>
</dbReference>
<dbReference type="InterPro" id="IPR008909">
    <property type="entry name" value="DALR_anticod-bd"/>
</dbReference>
<dbReference type="InterPro" id="IPR014729">
    <property type="entry name" value="Rossmann-like_a/b/a_fold"/>
</dbReference>
<dbReference type="InterPro" id="IPR009080">
    <property type="entry name" value="tRNAsynth_Ia_anticodon-bd"/>
</dbReference>
<dbReference type="NCBIfam" id="TIGR00456">
    <property type="entry name" value="argS"/>
    <property type="match status" value="1"/>
</dbReference>
<dbReference type="PANTHER" id="PTHR11956:SF5">
    <property type="entry name" value="ARGININE--TRNA LIGASE, CYTOPLASMIC"/>
    <property type="match status" value="1"/>
</dbReference>
<dbReference type="PANTHER" id="PTHR11956">
    <property type="entry name" value="ARGINYL-TRNA SYNTHETASE"/>
    <property type="match status" value="1"/>
</dbReference>
<dbReference type="Pfam" id="PF03485">
    <property type="entry name" value="Arg_tRNA_synt_N"/>
    <property type="match status" value="1"/>
</dbReference>
<dbReference type="Pfam" id="PF05746">
    <property type="entry name" value="DALR_1"/>
    <property type="match status" value="1"/>
</dbReference>
<dbReference type="Pfam" id="PF00750">
    <property type="entry name" value="tRNA-synt_1d"/>
    <property type="match status" value="1"/>
</dbReference>
<dbReference type="PRINTS" id="PR01038">
    <property type="entry name" value="TRNASYNTHARG"/>
</dbReference>
<dbReference type="SMART" id="SM01016">
    <property type="entry name" value="Arg_tRNA_synt_N"/>
    <property type="match status" value="1"/>
</dbReference>
<dbReference type="SMART" id="SM00836">
    <property type="entry name" value="DALR_1"/>
    <property type="match status" value="1"/>
</dbReference>
<dbReference type="SUPFAM" id="SSF47323">
    <property type="entry name" value="Anticodon-binding domain of a subclass of class I aminoacyl-tRNA synthetases"/>
    <property type="match status" value="1"/>
</dbReference>
<dbReference type="SUPFAM" id="SSF55190">
    <property type="entry name" value="Arginyl-tRNA synthetase (ArgRS), N-terminal 'additional' domain"/>
    <property type="match status" value="1"/>
</dbReference>
<dbReference type="SUPFAM" id="SSF52374">
    <property type="entry name" value="Nucleotidylyl transferase"/>
    <property type="match status" value="1"/>
</dbReference>
<dbReference type="PROSITE" id="PS00178">
    <property type="entry name" value="AA_TRNA_LIGASE_I"/>
    <property type="match status" value="1"/>
</dbReference>
<protein>
    <recommendedName>
        <fullName evidence="1">Arginine--tRNA ligase</fullName>
        <ecNumber evidence="1">6.1.1.19</ecNumber>
    </recommendedName>
    <alternativeName>
        <fullName evidence="1">Arginyl-tRNA synthetase</fullName>
        <shortName evidence="1">ArgRS</shortName>
    </alternativeName>
</protein>
<comment type="catalytic activity">
    <reaction evidence="1">
        <text>tRNA(Arg) + L-arginine + ATP = L-arginyl-tRNA(Arg) + AMP + diphosphate</text>
        <dbReference type="Rhea" id="RHEA:20301"/>
        <dbReference type="Rhea" id="RHEA-COMP:9658"/>
        <dbReference type="Rhea" id="RHEA-COMP:9673"/>
        <dbReference type="ChEBI" id="CHEBI:30616"/>
        <dbReference type="ChEBI" id="CHEBI:32682"/>
        <dbReference type="ChEBI" id="CHEBI:33019"/>
        <dbReference type="ChEBI" id="CHEBI:78442"/>
        <dbReference type="ChEBI" id="CHEBI:78513"/>
        <dbReference type="ChEBI" id="CHEBI:456215"/>
        <dbReference type="EC" id="6.1.1.19"/>
    </reaction>
</comment>
<comment type="subunit">
    <text evidence="1">Monomer.</text>
</comment>
<comment type="subcellular location">
    <subcellularLocation>
        <location evidence="1">Cytoplasm</location>
    </subcellularLocation>
</comment>
<comment type="similarity">
    <text evidence="1">Belongs to the class-I aminoacyl-tRNA synthetase family.</text>
</comment>
<accession>A6LHY5</accession>
<name>SYR_PARD8</name>
<proteinExistence type="inferred from homology"/>
<gene>
    <name evidence="1" type="primary">argS</name>
    <name type="ordered locus">BDI_3601</name>
</gene>
<sequence>MVIEQQITGAIIAGIKELYGADVTASQVQLQKTKKEFKGHLTLVVFPFLRMSKKSPEQTAQEIGEYLLRNEPAVAEFNVIKGFLNLTVACSCWIDLLNSINEQPAYGIIPVTEQSPLVMIEYSSPNTNKPLHLGHVRNNLLGYSLSKIIKANGNQIVKTNIVNDRGIHICKSMLAWQKWGNGATPESTGKKGDHLIGDFYVLFSNKLKEETHALEAKGLTKEEAEAQSTLMAEAREMLRKWEAGDKEVRALWEMMNNWVYAGFNETYKMMGVDFDKIYYESQTYLEGKGKVMEGLEKGIFYRREDGSVWADLTKDGLDEKLLLRADGTSVYMTQDIGTAKLRFDDYPINKMIYVVGNEQNYHFQVLSILLDKLGFEFGKGLVHFSYGMVELPEGKMKSREGTVVDADDLMAEMISTAREISQELGKLDEMTPEEAENIARIVGLGSLKYFILKVDPRKNMTFNPKESIDFNGNTGPFIQYTYARIRSVLRKAAEQGIVLPEQLPLTFAISEKEENLIQMIADYAEIVKEAGKLYSPACVANYIYDLVKEYNQFYHDFSILREENPELKNFRLVLSANVAKIVKSGMDLLGIEVPERM</sequence>
<organism>
    <name type="scientific">Parabacteroides distasonis (strain ATCC 8503 / DSM 20701 / CIP 104284 / JCM 5825 / NCTC 11152)</name>
    <dbReference type="NCBI Taxonomy" id="435591"/>
    <lineage>
        <taxon>Bacteria</taxon>
        <taxon>Pseudomonadati</taxon>
        <taxon>Bacteroidota</taxon>
        <taxon>Bacteroidia</taxon>
        <taxon>Bacteroidales</taxon>
        <taxon>Tannerellaceae</taxon>
        <taxon>Parabacteroides</taxon>
    </lineage>
</organism>
<feature type="chain" id="PRO_1000018082" description="Arginine--tRNA ligase">
    <location>
        <begin position="1"/>
        <end position="597"/>
    </location>
</feature>
<feature type="short sequence motif" description="'HIGH' region">
    <location>
        <begin position="125"/>
        <end position="135"/>
    </location>
</feature>
<reference key="1">
    <citation type="journal article" date="2007" name="PLoS Biol.">
        <title>Evolution of symbiotic bacteria in the distal human intestine.</title>
        <authorList>
            <person name="Xu J."/>
            <person name="Mahowald M.A."/>
            <person name="Ley R.E."/>
            <person name="Lozupone C.A."/>
            <person name="Hamady M."/>
            <person name="Martens E.C."/>
            <person name="Henrissat B."/>
            <person name="Coutinho P.M."/>
            <person name="Minx P."/>
            <person name="Latreille P."/>
            <person name="Cordum H."/>
            <person name="Van Brunt A."/>
            <person name="Kim K."/>
            <person name="Fulton R.S."/>
            <person name="Fulton L.A."/>
            <person name="Clifton S.W."/>
            <person name="Wilson R.K."/>
            <person name="Knight R.D."/>
            <person name="Gordon J.I."/>
        </authorList>
    </citation>
    <scope>NUCLEOTIDE SEQUENCE [LARGE SCALE GENOMIC DNA]</scope>
    <source>
        <strain>ATCC 8503 / DSM 20701 / CIP 104284 / JCM 5825 / NCTC 11152</strain>
    </source>
</reference>
<evidence type="ECO:0000255" key="1">
    <source>
        <dbReference type="HAMAP-Rule" id="MF_00123"/>
    </source>
</evidence>